<dbReference type="EC" id="3.2.1.28" evidence="1"/>
<dbReference type="EMBL" id="AE005174">
    <property type="protein sequence ID" value="AAG56056.1"/>
    <property type="status" value="ALT_FRAME"/>
    <property type="molecule type" value="Genomic_DNA"/>
</dbReference>
<dbReference type="EMBL" id="BA000007">
    <property type="protein sequence ID" value="BAB35124.1"/>
    <property type="status" value="ALT_FRAME"/>
    <property type="molecule type" value="Genomic_DNA"/>
</dbReference>
<dbReference type="PIR" id="D85699">
    <property type="entry name" value="D85699"/>
</dbReference>
<dbReference type="PIR" id="E90841">
    <property type="entry name" value="E90841"/>
</dbReference>
<dbReference type="SMR" id="Q8XDH7"/>
<dbReference type="STRING" id="155864.Z1968"/>
<dbReference type="KEGG" id="ece:Z1968"/>
<dbReference type="eggNOG" id="COG1626">
    <property type="taxonomic scope" value="Bacteria"/>
</dbReference>
<dbReference type="HOGENOM" id="CLU_006451_3_1_6"/>
<dbReference type="Proteomes" id="UP000000558">
    <property type="component" value="Chromosome"/>
</dbReference>
<dbReference type="Proteomes" id="UP000002519">
    <property type="component" value="Chromosome"/>
</dbReference>
<dbReference type="GO" id="GO:0042597">
    <property type="term" value="C:periplasmic space"/>
    <property type="evidence" value="ECO:0007669"/>
    <property type="project" value="UniProtKB-SubCell"/>
</dbReference>
<dbReference type="GO" id="GO:0004555">
    <property type="term" value="F:alpha,alpha-trehalase activity"/>
    <property type="evidence" value="ECO:0007669"/>
    <property type="project" value="UniProtKB-UniRule"/>
</dbReference>
<dbReference type="GO" id="GO:0071474">
    <property type="term" value="P:cellular hyperosmotic response"/>
    <property type="evidence" value="ECO:0007669"/>
    <property type="project" value="InterPro"/>
</dbReference>
<dbReference type="GO" id="GO:0005993">
    <property type="term" value="P:trehalose catabolic process"/>
    <property type="evidence" value="ECO:0007669"/>
    <property type="project" value="InterPro"/>
</dbReference>
<dbReference type="FunFam" id="1.50.10.10:FF:000003">
    <property type="entry name" value="Cytoplasmic trehalase"/>
    <property type="match status" value="1"/>
</dbReference>
<dbReference type="Gene3D" id="1.50.10.10">
    <property type="match status" value="1"/>
</dbReference>
<dbReference type="HAMAP" id="MF_01060">
    <property type="entry name" value="Peripl_trehalase"/>
    <property type="match status" value="1"/>
</dbReference>
<dbReference type="InterPro" id="IPR008928">
    <property type="entry name" value="6-hairpin_glycosidase_sf"/>
</dbReference>
<dbReference type="InterPro" id="IPR012341">
    <property type="entry name" value="6hp_glycosidase-like_sf"/>
</dbReference>
<dbReference type="InterPro" id="IPR001661">
    <property type="entry name" value="Glyco_hydro_37"/>
</dbReference>
<dbReference type="InterPro" id="IPR018232">
    <property type="entry name" value="Glyco_hydro_37_CS"/>
</dbReference>
<dbReference type="InterPro" id="IPR023720">
    <property type="entry name" value="Trehalase_periplasmic"/>
</dbReference>
<dbReference type="NCBIfam" id="NF009773">
    <property type="entry name" value="PRK13270.1"/>
    <property type="match status" value="1"/>
</dbReference>
<dbReference type="NCBIfam" id="NF009774">
    <property type="entry name" value="PRK13271.1"/>
    <property type="match status" value="1"/>
</dbReference>
<dbReference type="PANTHER" id="PTHR23403">
    <property type="entry name" value="TREHALASE"/>
    <property type="match status" value="1"/>
</dbReference>
<dbReference type="PANTHER" id="PTHR23403:SF1">
    <property type="entry name" value="TREHALASE"/>
    <property type="match status" value="1"/>
</dbReference>
<dbReference type="Pfam" id="PF01204">
    <property type="entry name" value="Trehalase"/>
    <property type="match status" value="1"/>
</dbReference>
<dbReference type="PRINTS" id="PR00744">
    <property type="entry name" value="GLHYDRLASE37"/>
</dbReference>
<dbReference type="SUPFAM" id="SSF48208">
    <property type="entry name" value="Six-hairpin glycosidases"/>
    <property type="match status" value="1"/>
</dbReference>
<dbReference type="PROSITE" id="PS00927">
    <property type="entry name" value="TREHALASE_1"/>
    <property type="match status" value="1"/>
</dbReference>
<dbReference type="PROSITE" id="PS00928">
    <property type="entry name" value="TREHALASE_2"/>
    <property type="match status" value="1"/>
</dbReference>
<gene>
    <name evidence="1" type="primary">treA</name>
    <name type="ordered locus">Z1968</name>
    <name type="ordered locus">ECs1701</name>
</gene>
<protein>
    <recommendedName>
        <fullName>Putative periplasmic trehalase</fullName>
        <ecNumber evidence="1">3.2.1.28</ecNumber>
    </recommendedName>
    <alternativeName>
        <fullName evidence="1">Alpha,alpha-trehalase</fullName>
    </alternativeName>
    <alternativeName>
        <fullName evidence="1">Alpha,alpha-trehalose glucohydrolase</fullName>
    </alternativeName>
</protein>
<keyword id="KW-0326">Glycosidase</keyword>
<keyword id="KW-0378">Hydrolase</keyword>
<keyword id="KW-0574">Periplasm</keyword>
<keyword id="KW-1185">Reference proteome</keyword>
<keyword id="KW-0732">Signal</keyword>
<accession>Q8XDH7</accession>
<evidence type="ECO:0000255" key="1">
    <source>
        <dbReference type="HAMAP-Rule" id="MF_01060"/>
    </source>
</evidence>
<evidence type="ECO:0000256" key="2">
    <source>
        <dbReference type="SAM" id="MobiDB-lite"/>
    </source>
</evidence>
<evidence type="ECO:0000305" key="3"/>
<reference key="1">
    <citation type="journal article" date="2001" name="Nature">
        <title>Genome sequence of enterohaemorrhagic Escherichia coli O157:H7.</title>
        <authorList>
            <person name="Perna N.T."/>
            <person name="Plunkett G. III"/>
            <person name="Burland V."/>
            <person name="Mau B."/>
            <person name="Glasner J.D."/>
            <person name="Rose D.J."/>
            <person name="Mayhew G.F."/>
            <person name="Evans P.S."/>
            <person name="Gregor J."/>
            <person name="Kirkpatrick H.A."/>
            <person name="Posfai G."/>
            <person name="Hackett J."/>
            <person name="Klink S."/>
            <person name="Boutin A."/>
            <person name="Shao Y."/>
            <person name="Miller L."/>
            <person name="Grotbeck E.J."/>
            <person name="Davis N.W."/>
            <person name="Lim A."/>
            <person name="Dimalanta E.T."/>
            <person name="Potamousis K."/>
            <person name="Apodaca J."/>
            <person name="Anantharaman T.S."/>
            <person name="Lin J."/>
            <person name="Yen G."/>
            <person name="Schwartz D.C."/>
            <person name="Welch R.A."/>
            <person name="Blattner F.R."/>
        </authorList>
    </citation>
    <scope>NUCLEOTIDE SEQUENCE [LARGE SCALE GENOMIC DNA]</scope>
    <source>
        <strain>O157:H7 / EDL933 / ATCC 700927 / EHEC</strain>
    </source>
</reference>
<reference key="2">
    <citation type="journal article" date="2001" name="DNA Res.">
        <title>Complete genome sequence of enterohemorrhagic Escherichia coli O157:H7 and genomic comparison with a laboratory strain K-12.</title>
        <authorList>
            <person name="Hayashi T."/>
            <person name="Makino K."/>
            <person name="Ohnishi M."/>
            <person name="Kurokawa K."/>
            <person name="Ishii K."/>
            <person name="Yokoyama K."/>
            <person name="Han C.-G."/>
            <person name="Ohtsubo E."/>
            <person name="Nakayama K."/>
            <person name="Murata T."/>
            <person name="Tanaka M."/>
            <person name="Tobe T."/>
            <person name="Iida T."/>
            <person name="Takami H."/>
            <person name="Honda T."/>
            <person name="Sasakawa C."/>
            <person name="Ogasawara N."/>
            <person name="Yasunaga T."/>
            <person name="Kuhara S."/>
            <person name="Shiba T."/>
            <person name="Hattori M."/>
            <person name="Shinagawa H."/>
        </authorList>
    </citation>
    <scope>NUCLEOTIDE SEQUENCE [LARGE SCALE GENOMIC DNA]</scope>
    <source>
        <strain>O157:H7 / Sakai / RIMD 0509952 / EHEC</strain>
    </source>
</reference>
<comment type="function">
    <text evidence="1">Provides the cells with the ability to utilize trehalose at high osmolarity by splitting it into glucose molecules that can subsequently be taken up by the phosphotransferase-mediated uptake system.</text>
</comment>
<comment type="catalytic activity">
    <reaction evidence="1">
        <text>alpha,alpha-trehalose + H2O = alpha-D-glucose + beta-D-glucose</text>
        <dbReference type="Rhea" id="RHEA:32675"/>
        <dbReference type="ChEBI" id="CHEBI:15377"/>
        <dbReference type="ChEBI" id="CHEBI:15903"/>
        <dbReference type="ChEBI" id="CHEBI:16551"/>
        <dbReference type="ChEBI" id="CHEBI:17925"/>
        <dbReference type="EC" id="3.2.1.28"/>
    </reaction>
</comment>
<comment type="subunit">
    <text evidence="1">Monomer.</text>
</comment>
<comment type="subcellular location">
    <subcellularLocation>
        <location evidence="1">Periplasm</location>
    </subcellularLocation>
</comment>
<comment type="similarity">
    <text evidence="1">Belongs to the glycosyl hydrolase 37 family.</text>
</comment>
<comment type="caution">
    <text evidence="3">Could be the product of a pseudogene.</text>
</comment>
<comment type="sequence caution" evidence="3">
    <conflict type="frameshift">
        <sequence resource="EMBL-CDS" id="AAG56056"/>
    </conflict>
</comment>
<comment type="sequence caution" evidence="3">
    <conflict type="frameshift">
        <sequence resource="EMBL-CDS" id="BAB35124"/>
    </conflict>
</comment>
<sequence>MKSPAPSRPQKMALIPACIFLCFAALSVQAEETPVTPQPPDILLGPLFNDVQNAKLFPDQKTFADAVPNSDPLMIRMQQNQSGFDLRHFVNVNFTLPKEGEKYVPPEGQSLREHIDGLWPVLTRSTENTEKWDSLLPLPEPYVVPGGRFREVYYWDSYFTMLGLAESGHWDKVADMVANFAHEIDTYGHIPNGNRSYYLSRSQPPFFALMVELLAQHEGDAALKQYLPQMQKEYAYWMDGVENLQAGQQEKRVVKLQDGTLLNRYWDDRDTPRPESWVEDIATAKSNPNRPATEIYRDLRSAAASGWDFSSRWMDNPQQLNTLRTTSIVPVDLNSLMFKMEKILARASKAAGDNAMANQYETLANARQKGIEKYLWNDQQGWYADYDLKSHKVRNQLTAAALFPLYVNAAAKDRANKMATATKTHLLQPGGLNTTSVKSGQQWDAPNGWAPLQWVATEGLQNYGQKEVAMDISWHFLTNVQHTYDREKKLVEKYDVSTTGTGGGGGEYPLQDGFGWTNGVTLKMLDLICPKEQPCDNVPATRPLSESTTQPVKQKEAEPTP</sequence>
<name>TREA_ECO57</name>
<proteinExistence type="uncertain"/>
<organism>
    <name type="scientific">Escherichia coli O157:H7</name>
    <dbReference type="NCBI Taxonomy" id="83334"/>
    <lineage>
        <taxon>Bacteria</taxon>
        <taxon>Pseudomonadati</taxon>
        <taxon>Pseudomonadota</taxon>
        <taxon>Gammaproteobacteria</taxon>
        <taxon>Enterobacterales</taxon>
        <taxon>Enterobacteriaceae</taxon>
        <taxon>Escherichia</taxon>
    </lineage>
</organism>
<feature type="signal peptide" evidence="1">
    <location>
        <begin position="1"/>
        <end position="30"/>
    </location>
</feature>
<feature type="chain" id="PRO_0000012043" description="Putative periplasmic trehalase">
    <location>
        <begin position="31"/>
        <end position="561"/>
    </location>
</feature>
<feature type="region of interest" description="Disordered" evidence="2">
    <location>
        <begin position="535"/>
        <end position="561"/>
    </location>
</feature>
<feature type="active site" description="Proton donor/acceptor" evidence="1">
    <location>
        <position position="308"/>
    </location>
</feature>
<feature type="active site" description="Proton donor/acceptor" evidence="1">
    <location>
        <position position="492"/>
    </location>
</feature>
<feature type="binding site" evidence="1">
    <location>
        <position position="148"/>
    </location>
    <ligand>
        <name>substrate</name>
    </ligand>
</feature>
<feature type="binding site" evidence="1">
    <location>
        <begin position="155"/>
        <end position="156"/>
    </location>
    <ligand>
        <name>substrate</name>
    </ligand>
</feature>
<feature type="binding site" evidence="1">
    <location>
        <position position="192"/>
    </location>
    <ligand>
        <name>substrate</name>
    </ligand>
</feature>
<feature type="binding site" evidence="1">
    <location>
        <begin position="201"/>
        <end position="203"/>
    </location>
    <ligand>
        <name>substrate</name>
    </ligand>
</feature>
<feature type="binding site" evidence="1">
    <location>
        <begin position="273"/>
        <end position="275"/>
    </location>
    <ligand>
        <name>substrate</name>
    </ligand>
</feature>
<feature type="binding site" evidence="1">
    <location>
        <position position="306"/>
    </location>
    <ligand>
        <name>substrate</name>
    </ligand>
</feature>
<feature type="binding site" evidence="1">
    <location>
        <position position="507"/>
    </location>
    <ligand>
        <name>substrate</name>
    </ligand>
</feature>